<keyword id="KW-0324">Glycolysis</keyword>
<keyword id="KW-0413">Isomerase</keyword>
<keyword id="KW-0464">Manganese</keyword>
<keyword id="KW-0479">Metal-binding</keyword>
<organism>
    <name type="scientific">Ruthia magnifica subsp. Calyptogena magnifica</name>
    <dbReference type="NCBI Taxonomy" id="413404"/>
    <lineage>
        <taxon>Bacteria</taxon>
        <taxon>Pseudomonadati</taxon>
        <taxon>Pseudomonadota</taxon>
        <taxon>Gammaproteobacteria</taxon>
        <taxon>Candidatus Pseudothioglobaceae</taxon>
        <taxon>Candidatus Ruthturnera</taxon>
    </lineage>
</organism>
<comment type="function">
    <text evidence="1">Catalyzes the interconversion of 2-phosphoglycerate and 3-phosphoglycerate.</text>
</comment>
<comment type="catalytic activity">
    <reaction evidence="1">
        <text>(2R)-2-phosphoglycerate = (2R)-3-phosphoglycerate</text>
        <dbReference type="Rhea" id="RHEA:15901"/>
        <dbReference type="ChEBI" id="CHEBI:58272"/>
        <dbReference type="ChEBI" id="CHEBI:58289"/>
        <dbReference type="EC" id="5.4.2.12"/>
    </reaction>
</comment>
<comment type="cofactor">
    <cofactor evidence="1">
        <name>Mn(2+)</name>
        <dbReference type="ChEBI" id="CHEBI:29035"/>
    </cofactor>
    <text evidence="1">Binds 2 manganese ions per subunit.</text>
</comment>
<comment type="pathway">
    <text evidence="1">Carbohydrate degradation; glycolysis; pyruvate from D-glyceraldehyde 3-phosphate: step 3/5.</text>
</comment>
<comment type="subunit">
    <text evidence="1">Monomer.</text>
</comment>
<comment type="similarity">
    <text evidence="1">Belongs to the BPG-independent phosphoglycerate mutase family.</text>
</comment>
<sequence>MKSKKQTKLLLILDGWGYSETIQNNAIALANTPVWDKLNQTFLHSLIHTSGKDVGLPGKQMGNSEVGHLNLGAGRIVKQDFTRIYNELQNGDFFRNPILKNSLEYANDNNKAVHIMGLLSDGGVHSHEEQIHAMLEMTHKQGCKNVYLHLFTDGRDCAQKSAEKYIQKFEEKMAILGTGEIVSIIGRYFSMDRDNRWSRIRCAYELIAKGKAKFLAQSALHAVELAYARGETDEFIQSTSIKIPISIKKGDVLIFMNYRADRARQITRAFTDENLQGFSRGTFVPTQFICLTEYKKDFNLPVAYPSSKLNNVLGKYLSNLGMTQLRIAETEKYAHVTFFLNGGVEQAFNGEDRILIPSPDVATYDLQPEMSAFELTDALIESIESQKYDLIICNFANTDMVGHSGKLNATIKAVETIDSCLGIIHKAMFAISGEILITADHGNAEQMINPKTHEVHTAHTNNPVPLIFVSERKADISEPEKGALSDIAPTLLAMMDIEKPNEMTGNSLLTFK</sequence>
<dbReference type="EC" id="5.4.2.12" evidence="1"/>
<dbReference type="EMBL" id="CP000488">
    <property type="protein sequence ID" value="ABL02774.1"/>
    <property type="molecule type" value="Genomic_DNA"/>
</dbReference>
<dbReference type="RefSeq" id="WP_011738399.1">
    <property type="nucleotide sequence ID" value="NC_008610.1"/>
</dbReference>
<dbReference type="SMR" id="A1AXW7"/>
<dbReference type="STRING" id="413404.Rmag_1070"/>
<dbReference type="KEGG" id="rma:Rmag_1070"/>
<dbReference type="eggNOG" id="COG0696">
    <property type="taxonomic scope" value="Bacteria"/>
</dbReference>
<dbReference type="HOGENOM" id="CLU_026099_2_0_6"/>
<dbReference type="OrthoDB" id="9800863at2"/>
<dbReference type="UniPathway" id="UPA00109">
    <property type="reaction ID" value="UER00186"/>
</dbReference>
<dbReference type="Proteomes" id="UP000002587">
    <property type="component" value="Chromosome"/>
</dbReference>
<dbReference type="GO" id="GO:0005829">
    <property type="term" value="C:cytosol"/>
    <property type="evidence" value="ECO:0007669"/>
    <property type="project" value="TreeGrafter"/>
</dbReference>
<dbReference type="GO" id="GO:0030145">
    <property type="term" value="F:manganese ion binding"/>
    <property type="evidence" value="ECO:0007669"/>
    <property type="project" value="UniProtKB-UniRule"/>
</dbReference>
<dbReference type="GO" id="GO:0004619">
    <property type="term" value="F:phosphoglycerate mutase activity"/>
    <property type="evidence" value="ECO:0007669"/>
    <property type="project" value="UniProtKB-EC"/>
</dbReference>
<dbReference type="GO" id="GO:0006007">
    <property type="term" value="P:glucose catabolic process"/>
    <property type="evidence" value="ECO:0007669"/>
    <property type="project" value="InterPro"/>
</dbReference>
<dbReference type="GO" id="GO:0006096">
    <property type="term" value="P:glycolytic process"/>
    <property type="evidence" value="ECO:0007669"/>
    <property type="project" value="UniProtKB-UniRule"/>
</dbReference>
<dbReference type="CDD" id="cd16010">
    <property type="entry name" value="iPGM"/>
    <property type="match status" value="1"/>
</dbReference>
<dbReference type="FunFam" id="3.40.1450.10:FF:000002">
    <property type="entry name" value="2,3-bisphosphoglycerate-independent phosphoglycerate mutase"/>
    <property type="match status" value="1"/>
</dbReference>
<dbReference type="Gene3D" id="3.40.720.10">
    <property type="entry name" value="Alkaline Phosphatase, subunit A"/>
    <property type="match status" value="1"/>
</dbReference>
<dbReference type="Gene3D" id="3.40.1450.10">
    <property type="entry name" value="BPG-independent phosphoglycerate mutase, domain B"/>
    <property type="match status" value="1"/>
</dbReference>
<dbReference type="HAMAP" id="MF_01038">
    <property type="entry name" value="GpmI"/>
    <property type="match status" value="1"/>
</dbReference>
<dbReference type="InterPro" id="IPR017850">
    <property type="entry name" value="Alkaline_phosphatase_core_sf"/>
</dbReference>
<dbReference type="InterPro" id="IPR011258">
    <property type="entry name" value="BPG-indep_PGM_N"/>
</dbReference>
<dbReference type="InterPro" id="IPR006124">
    <property type="entry name" value="Metalloenzyme"/>
</dbReference>
<dbReference type="InterPro" id="IPR036646">
    <property type="entry name" value="PGAM_B_sf"/>
</dbReference>
<dbReference type="InterPro" id="IPR005995">
    <property type="entry name" value="Pgm_bpd_ind"/>
</dbReference>
<dbReference type="NCBIfam" id="TIGR01307">
    <property type="entry name" value="pgm_bpd_ind"/>
    <property type="match status" value="1"/>
</dbReference>
<dbReference type="PANTHER" id="PTHR31637">
    <property type="entry name" value="2,3-BISPHOSPHOGLYCERATE-INDEPENDENT PHOSPHOGLYCERATE MUTASE"/>
    <property type="match status" value="1"/>
</dbReference>
<dbReference type="PANTHER" id="PTHR31637:SF0">
    <property type="entry name" value="2,3-BISPHOSPHOGLYCERATE-INDEPENDENT PHOSPHOGLYCERATE MUTASE"/>
    <property type="match status" value="1"/>
</dbReference>
<dbReference type="Pfam" id="PF06415">
    <property type="entry name" value="iPGM_N"/>
    <property type="match status" value="1"/>
</dbReference>
<dbReference type="Pfam" id="PF01676">
    <property type="entry name" value="Metalloenzyme"/>
    <property type="match status" value="1"/>
</dbReference>
<dbReference type="PIRSF" id="PIRSF001492">
    <property type="entry name" value="IPGAM"/>
    <property type="match status" value="1"/>
</dbReference>
<dbReference type="SUPFAM" id="SSF64158">
    <property type="entry name" value="2,3-Bisphosphoglycerate-independent phosphoglycerate mutase, substrate-binding domain"/>
    <property type="match status" value="1"/>
</dbReference>
<dbReference type="SUPFAM" id="SSF53649">
    <property type="entry name" value="Alkaline phosphatase-like"/>
    <property type="match status" value="1"/>
</dbReference>
<evidence type="ECO:0000255" key="1">
    <source>
        <dbReference type="HAMAP-Rule" id="MF_01038"/>
    </source>
</evidence>
<proteinExistence type="inferred from homology"/>
<protein>
    <recommendedName>
        <fullName evidence="1">2,3-bisphosphoglycerate-independent phosphoglycerate mutase</fullName>
        <shortName evidence="1">BPG-independent PGAM</shortName>
        <shortName evidence="1">Phosphoglyceromutase</shortName>
        <shortName evidence="1">iPGM</shortName>
        <ecNumber evidence="1">5.4.2.12</ecNumber>
    </recommendedName>
</protein>
<accession>A1AXW7</accession>
<feature type="chain" id="PRO_1000063998" description="2,3-bisphosphoglycerate-independent phosphoglycerate mutase">
    <location>
        <begin position="1"/>
        <end position="512"/>
    </location>
</feature>
<feature type="active site" description="Phosphoserine intermediate" evidence="1">
    <location>
        <position position="64"/>
    </location>
</feature>
<feature type="binding site" evidence="1">
    <location>
        <position position="14"/>
    </location>
    <ligand>
        <name>Mn(2+)</name>
        <dbReference type="ChEBI" id="CHEBI:29035"/>
        <label>2</label>
    </ligand>
</feature>
<feature type="binding site" evidence="1">
    <location>
        <position position="64"/>
    </location>
    <ligand>
        <name>Mn(2+)</name>
        <dbReference type="ChEBI" id="CHEBI:29035"/>
        <label>2</label>
    </ligand>
</feature>
<feature type="binding site" evidence="1">
    <location>
        <position position="125"/>
    </location>
    <ligand>
        <name>substrate</name>
    </ligand>
</feature>
<feature type="binding site" evidence="1">
    <location>
        <begin position="155"/>
        <end position="156"/>
    </location>
    <ligand>
        <name>substrate</name>
    </ligand>
</feature>
<feature type="binding site" evidence="1">
    <location>
        <position position="187"/>
    </location>
    <ligand>
        <name>substrate</name>
    </ligand>
</feature>
<feature type="binding site" evidence="1">
    <location>
        <position position="193"/>
    </location>
    <ligand>
        <name>substrate</name>
    </ligand>
</feature>
<feature type="binding site" evidence="1">
    <location>
        <begin position="259"/>
        <end position="262"/>
    </location>
    <ligand>
        <name>substrate</name>
    </ligand>
</feature>
<feature type="binding site" evidence="1">
    <location>
        <position position="332"/>
    </location>
    <ligand>
        <name>substrate</name>
    </ligand>
</feature>
<feature type="binding site" evidence="1">
    <location>
        <position position="399"/>
    </location>
    <ligand>
        <name>Mn(2+)</name>
        <dbReference type="ChEBI" id="CHEBI:29035"/>
        <label>1</label>
    </ligand>
</feature>
<feature type="binding site" evidence="1">
    <location>
        <position position="403"/>
    </location>
    <ligand>
        <name>Mn(2+)</name>
        <dbReference type="ChEBI" id="CHEBI:29035"/>
        <label>1</label>
    </ligand>
</feature>
<feature type="binding site" evidence="1">
    <location>
        <position position="440"/>
    </location>
    <ligand>
        <name>Mn(2+)</name>
        <dbReference type="ChEBI" id="CHEBI:29035"/>
        <label>2</label>
    </ligand>
</feature>
<feature type="binding site" evidence="1">
    <location>
        <position position="441"/>
    </location>
    <ligand>
        <name>Mn(2+)</name>
        <dbReference type="ChEBI" id="CHEBI:29035"/>
        <label>2</label>
    </ligand>
</feature>
<feature type="binding site" evidence="1">
    <location>
        <position position="459"/>
    </location>
    <ligand>
        <name>Mn(2+)</name>
        <dbReference type="ChEBI" id="CHEBI:29035"/>
        <label>1</label>
    </ligand>
</feature>
<gene>
    <name evidence="1" type="primary">gpmI</name>
    <name type="ordered locus">Rmag_1070</name>
</gene>
<reference key="1">
    <citation type="journal article" date="2007" name="Science">
        <title>The Calyptogena magnifica chemoautotrophic symbiont genome.</title>
        <authorList>
            <person name="Newton I.L.G."/>
            <person name="Woyke T."/>
            <person name="Auchtung T.A."/>
            <person name="Dilly G.F."/>
            <person name="Dutton R.J."/>
            <person name="Fisher M.C."/>
            <person name="Fontanez K.M."/>
            <person name="Lau E."/>
            <person name="Stewart F.J."/>
            <person name="Richardson P.M."/>
            <person name="Barry K.W."/>
            <person name="Saunders E."/>
            <person name="Detter J.C."/>
            <person name="Wu D."/>
            <person name="Eisen J.A."/>
            <person name="Cavanaugh C.M."/>
        </authorList>
    </citation>
    <scope>NUCLEOTIDE SEQUENCE [LARGE SCALE GENOMIC DNA]</scope>
</reference>
<name>GPMI_RUTMC</name>